<protein>
    <recommendedName>
        <fullName evidence="12">SCY1-like protein 2</fullName>
    </recommendedName>
    <alternativeName>
        <fullName evidence="11">Coated vesicle-associated kinase of 104 kDa</fullName>
    </alternativeName>
</protein>
<organism>
    <name type="scientific">Homo sapiens</name>
    <name type="common">Human</name>
    <dbReference type="NCBI Taxonomy" id="9606"/>
    <lineage>
        <taxon>Eukaryota</taxon>
        <taxon>Metazoa</taxon>
        <taxon>Chordata</taxon>
        <taxon>Craniata</taxon>
        <taxon>Vertebrata</taxon>
        <taxon>Euteleostomi</taxon>
        <taxon>Mammalia</taxon>
        <taxon>Eutheria</taxon>
        <taxon>Euarchontoglires</taxon>
        <taxon>Primates</taxon>
        <taxon>Haplorrhini</taxon>
        <taxon>Catarrhini</taxon>
        <taxon>Hominidae</taxon>
        <taxon>Homo</taxon>
    </lineage>
</organism>
<accession>Q6P3W7</accession>
<accession>A8KAB5</accession>
<accession>Q96EF4</accession>
<accession>Q96ST4</accession>
<accession>Q9H7V5</accession>
<accession>Q9NVH3</accession>
<accession>Q9P2I7</accession>
<sequence>MESMLNKLKSTVTKVTADVTSAVMGNPVTREFDVGRHIASGGNGLAWKIFNGTKKSTKQEVAVFVFDKKLIDKYQKFEKDQIIDSLKRGVQQLTRLRHPRLLTVQHPLEESRDCLAFCTEPVFASLANVLGNWENLPSPISPDIKDYKLYDVETKYGLLQVSEGLSFLHSSVKMVHGNITPENIILNKSGAWKIMGFDFCVSSTNPSEQEPKFPCKEWDPNLPSLCLPNPEYLAPEYILSVSCETASDMYSLGTVMYAVFNKGKPIFEVNKQDIYKSFSRQLDQLSRLGSSSLTNIPEEVREHVKLLLNVTPTVRPDADQMTKIPFFDDVGAVTLQYFDTLFQRDNLQKSQFFKGLPKVLPKLPKRVIVQRILPCLTSEFVNPDMVPFVLPNVLLIAEECTKEEYVKLILPELGPVFKQQEPIQILLIFLQKMDLLLTKTPPDEIKNSVLPMVYRALEAPSIQIQELCLNIIPTFANLIDYPSMKNALIPRIKNACLQTSSLAVRVNSLVCLGKILEYLDKWFVLDDILPFLQQIPSKEPAVLMGILGIYKCTFTHKKLGITKEQLAGKVLPHLIPLSIENNLNLNQFNSFISVIKEMLNRLESEHKTKLEQLHIMQEQQKSLDIGNQMNVSEEMKVTNIGNQQIDKVFNNIGADLLTGSESENKEDGLQNKHKRASLTLEEKQKLAKEQEQAQKLKSQQPLKPQVHTPVATVKQTKDLTDTLMDNMSSLTSLSVSTPKSSASSTFTSVPSMGIGMMFSTPTDNTKRNLTNGLNANMGFQTSGFNMPVNTNQNFYSSPSTVGVTKMTLGTPPTLPNFNALSVPPAGAKQTQQRPTDMSALNNLFGPQKPKVSMNQLSQQKPNQWLNQFVPPQGSPTMGSSVMGTQMNVIGQSAFGMQGNPFFNPQNFAQPPTTMTNSSSASNDLKDLFG</sequence>
<keyword id="KW-0175">Coiled coil</keyword>
<keyword id="KW-0968">Cytoplasmic vesicle</keyword>
<keyword id="KW-0225">Disease variant</keyword>
<keyword id="KW-0967">Endosome</keyword>
<keyword id="KW-0333">Golgi apparatus</keyword>
<keyword id="KW-0472">Membrane</keyword>
<keyword id="KW-0597">Phosphoprotein</keyword>
<keyword id="KW-1267">Proteomics identification</keyword>
<keyword id="KW-1185">Reference proteome</keyword>
<gene>
    <name evidence="16" type="primary">SCYL2</name>
    <name evidence="11" type="synonym">CVAK104</name>
    <name evidence="15" type="synonym">KIAA1360</name>
</gene>
<feature type="chain" id="PRO_0000252446" description="SCY1-like protein 2">
    <location>
        <begin position="1"/>
        <end position="929"/>
    </location>
</feature>
<feature type="domain" description="Protein kinase" evidence="3">
    <location>
        <begin position="32"/>
        <end position="327"/>
    </location>
</feature>
<feature type="repeat" description="HEAT">
    <location>
        <begin position="443"/>
        <end position="479"/>
    </location>
</feature>
<feature type="region of interest" description="Disordered" evidence="4">
    <location>
        <begin position="684"/>
        <end position="709"/>
    </location>
</feature>
<feature type="region of interest" description="Necessary for interaction with AP2 complex and clathrin, interaction with clathrin is necessary for its targeting to the TGN and endosomal membranes">
    <location>
        <begin position="699"/>
        <end position="929"/>
    </location>
</feature>
<feature type="region of interest" description="Disordered" evidence="4">
    <location>
        <begin position="906"/>
        <end position="929"/>
    </location>
</feature>
<feature type="coiled-coil region" evidence="2">
    <location>
        <begin position="661"/>
        <end position="701"/>
    </location>
</feature>
<feature type="compositionally biased region" description="Basic and acidic residues" evidence="4">
    <location>
        <begin position="684"/>
        <end position="694"/>
    </location>
</feature>
<feature type="compositionally biased region" description="Low complexity" evidence="4">
    <location>
        <begin position="695"/>
        <end position="705"/>
    </location>
</feature>
<feature type="compositionally biased region" description="Polar residues" evidence="4">
    <location>
        <begin position="912"/>
        <end position="922"/>
    </location>
</feature>
<feature type="modified residue" description="Phosphoserine" evidence="17 18">
    <location>
        <position position="677"/>
    </location>
</feature>
<feature type="modified residue" description="Phosphothreonine" evidence="18">
    <location>
        <position position="708"/>
    </location>
</feature>
<feature type="sequence variant" id="VAR_083876" description="In AMC4." evidence="10">
    <location>
        <begin position="36"/>
        <end position="929"/>
    </location>
</feature>
<feature type="sequence variant" id="VAR_041368" description="In dbSNP:rs33968174." evidence="5 9">
    <original>P</original>
    <variation>L</variation>
    <location>
        <position position="357"/>
    </location>
</feature>
<feature type="sequence variant" id="VAR_041369" description="In dbSNP:rs763873645." evidence="9">
    <original>T</original>
    <variation>S</variation>
    <location>
        <position position="720"/>
    </location>
</feature>
<feature type="sequence variant" id="VAR_041370" description="In a lung adenocarcinoma sample; somatic mutation." evidence="9">
    <original>Q</original>
    <variation>H</variation>
    <location>
        <position position="863"/>
    </location>
</feature>
<feature type="sequence conflict" description="In Ref. 4; BAA92598." evidence="12" ref="4">
    <original>PISPDIK</original>
    <variation>LMSGDIG</variation>
    <location>
        <begin position="139"/>
        <end position="145"/>
    </location>
</feature>
<feature type="sequence conflict" description="In Ref. 1; BAB14869." evidence="12" ref="1">
    <original>L</original>
    <variation>S</variation>
    <location>
        <position position="186"/>
    </location>
</feature>
<feature type="sequence conflict" description="In Ref. 4; BAA92598." evidence="12" ref="4">
    <original>Q</original>
    <variation>QASNM</variation>
    <location>
        <position position="424"/>
    </location>
</feature>
<feature type="sequence conflict" description="In Ref. 1; BAB14869." evidence="12" ref="1">
    <original>K</original>
    <variation>R</variation>
    <location>
        <position position="439"/>
    </location>
</feature>
<feature type="sequence conflict" description="In Ref. 3; AAH12387." evidence="12" ref="3">
    <original>F</original>
    <variation>L</variation>
    <location>
        <position position="554"/>
    </location>
</feature>
<feature type="sequence conflict" description="In Ref. 1; BAB14869." evidence="12" ref="1">
    <original>Q</original>
    <variation>R</variation>
    <location>
        <position position="628"/>
    </location>
</feature>
<feature type="sequence conflict" description="In Ref. 3; AAH12387." evidence="12" ref="3">
    <original>T</original>
    <variation>I</variation>
    <location>
        <position position="638"/>
    </location>
</feature>
<feature type="sequence conflict" description="In Ref. 1; BAA91778." evidence="12" ref="1">
    <original>T</original>
    <variation>A</variation>
    <location>
        <position position="747"/>
    </location>
</feature>
<evidence type="ECO:0000250" key="1">
    <source>
        <dbReference type="UniProtKB" id="Q8CFE4"/>
    </source>
</evidence>
<evidence type="ECO:0000255" key="2"/>
<evidence type="ECO:0000255" key="3">
    <source>
        <dbReference type="PROSITE-ProRule" id="PRU00159"/>
    </source>
</evidence>
<evidence type="ECO:0000256" key="4">
    <source>
        <dbReference type="SAM" id="MobiDB-lite"/>
    </source>
</evidence>
<evidence type="ECO:0000269" key="5">
    <source>
    </source>
</evidence>
<evidence type="ECO:0000269" key="6">
    <source>
    </source>
</evidence>
<evidence type="ECO:0000269" key="7">
    <source>
    </source>
</evidence>
<evidence type="ECO:0000269" key="8">
    <source>
    </source>
</evidence>
<evidence type="ECO:0000269" key="9">
    <source>
    </source>
</evidence>
<evidence type="ECO:0000269" key="10">
    <source>
    </source>
</evidence>
<evidence type="ECO:0000303" key="11">
    <source>
    </source>
</evidence>
<evidence type="ECO:0000305" key="12"/>
<evidence type="ECO:0000305" key="13">
    <source>
    </source>
</evidence>
<evidence type="ECO:0000305" key="14">
    <source>
    </source>
</evidence>
<evidence type="ECO:0000312" key="15">
    <source>
        <dbReference type="EMBL" id="BAA92598.1"/>
    </source>
</evidence>
<evidence type="ECO:0000312" key="16">
    <source>
        <dbReference type="HGNC" id="HGNC:19286"/>
    </source>
</evidence>
<evidence type="ECO:0007744" key="17">
    <source>
    </source>
</evidence>
<evidence type="ECO:0007744" key="18">
    <source>
    </source>
</evidence>
<comment type="function">
    <text evidence="1 6 8 13 14">Component of the AP2-containing clathrin coat that may regulate clathrin-dependent trafficking at plasma membrane, TGN and endosomal system (Probable). A possible serine/threonine-protein kinase toward the beta2-subunit of the plasma membrane adapter complex AP2 and other proteins in presence of poly-L-lysine has not been confirmed (PubMed:15809293, PubMed:16914521). By regulating the expression of excitatory receptors at synapses, plays an essential role in neuronal function and signaling and in brain development (By similarity).</text>
</comment>
<comment type="subunit">
    <text evidence="6 7 8">Interacts with clathrin and AP2B1; the interaction mediates the association with the AP-2 complex.</text>
</comment>
<comment type="interaction">
    <interactant intactId="EBI-1046810">
        <id>Q6P3W7</id>
    </interactant>
    <interactant intactId="EBI-723489">
        <id>O14640</id>
        <label>DVL1</label>
    </interactant>
    <organismsDiffer>false</organismsDiffer>
    <experiments>4</experiments>
</comment>
<comment type="interaction">
    <interactant intactId="EBI-1046810">
        <id>Q6P3W7</id>
    </interactant>
    <interactant intactId="EBI-3913027">
        <id>Q13467</id>
        <label>FZD5</label>
    </interactant>
    <organismsDiffer>false</organismsDiffer>
    <experiments>4</experiments>
</comment>
<comment type="subcellular location">
    <subcellularLocation>
        <location evidence="6 8">Cytoplasmic vesicle</location>
        <location evidence="6 8">Clathrin-coated vesicle</location>
    </subcellularLocation>
    <subcellularLocation>
        <location evidence="8">Golgi apparatus</location>
        <location evidence="8">trans-Golgi network membrane</location>
    </subcellularLocation>
    <subcellularLocation>
        <location evidence="8">Endosome membrane</location>
    </subcellularLocation>
    <text evidence="8">Colocalizes to the trans-Golgi network (TGN) and to endosomal membranes with clathrin, transferrin and plasma membrane adapter AP1 and AP3 complexes.</text>
</comment>
<comment type="PTM">
    <text evidence="6">Could autophosphorylate in presence of poly-L-lysine.</text>
</comment>
<comment type="disease" evidence="10">
    <disease id="DI-05753">
        <name>Arthrogryposis multiplex congenita 4, neurogenic, with agenesis of the corpus callosum</name>
        <acronym>AMC4</acronym>
        <description>A form of arthrogryposis multiplex congenita, a developmental condition characterized by multiple joint contractures resulting from reduced or absent fetal movements. AMC4 is an autosomal recessive, severe form with onset in utero. Patients manifest little or no fetal movements, significant contractures affecting the upper and lower limbs, dysmorphic facial features, optic atrophy, limb fractures, profound global developmental delay, seizures, and peripheral neuropathy. Many patients die in early childhood.</description>
        <dbReference type="MIM" id="618766"/>
    </disease>
    <text>The disease is caused by variants affecting the gene represented in this entry.</text>
</comment>
<comment type="similarity">
    <text evidence="12">Belongs to the protein kinase superfamily.</text>
</comment>
<comment type="sequence caution" evidence="12">
    <conflict type="erroneous initiation">
        <sequence resource="EMBL-CDS" id="BAA91778"/>
    </conflict>
    <text>Truncated N-terminus.</text>
</comment>
<comment type="sequence caution" evidence="12">
    <conflict type="erroneous initiation">
        <sequence resource="EMBL-CDS" id="BAB14869"/>
    </conflict>
    <text>Truncated N-terminus.</text>
</comment>
<comment type="sequence caution" evidence="12">
    <conflict type="erroneous initiation">
        <sequence resource="EMBL-CDS" id="BAB55194"/>
    </conflict>
    <text>Truncated N-terminus.</text>
</comment>
<dbReference type="EMBL" id="AK001597">
    <property type="protein sequence ID" value="BAA91778.1"/>
    <property type="status" value="ALT_INIT"/>
    <property type="molecule type" value="mRNA"/>
</dbReference>
<dbReference type="EMBL" id="AK024274">
    <property type="protein sequence ID" value="BAB14869.1"/>
    <property type="status" value="ALT_INIT"/>
    <property type="molecule type" value="mRNA"/>
</dbReference>
<dbReference type="EMBL" id="AK027551">
    <property type="protein sequence ID" value="BAB55194.1"/>
    <property type="status" value="ALT_INIT"/>
    <property type="molecule type" value="mRNA"/>
</dbReference>
<dbReference type="EMBL" id="AK292980">
    <property type="protein sequence ID" value="BAF85669.1"/>
    <property type="molecule type" value="mRNA"/>
</dbReference>
<dbReference type="EMBL" id="CH471054">
    <property type="protein sequence ID" value="EAW97633.1"/>
    <property type="molecule type" value="Genomic_DNA"/>
</dbReference>
<dbReference type="EMBL" id="BC012387">
    <property type="protein sequence ID" value="AAH12387.3"/>
    <property type="molecule type" value="mRNA"/>
</dbReference>
<dbReference type="EMBL" id="BC063798">
    <property type="protein sequence ID" value="AAH63798.1"/>
    <property type="molecule type" value="mRNA"/>
</dbReference>
<dbReference type="EMBL" id="AB037781">
    <property type="protein sequence ID" value="BAA92598.1"/>
    <property type="molecule type" value="mRNA"/>
</dbReference>
<dbReference type="CCDS" id="CCDS9076.1"/>
<dbReference type="RefSeq" id="NP_001304713.1">
    <property type="nucleotide sequence ID" value="NM_001317784.2"/>
</dbReference>
<dbReference type="RefSeq" id="NP_001317182.1">
    <property type="nucleotide sequence ID" value="NM_001330253.1"/>
</dbReference>
<dbReference type="RefSeq" id="NP_001317183.1">
    <property type="nucleotide sequence ID" value="NM_001330254.1"/>
</dbReference>
<dbReference type="RefSeq" id="NP_001317185.1">
    <property type="nucleotide sequence ID" value="NM_001330256.1"/>
</dbReference>
<dbReference type="RefSeq" id="NP_060458.3">
    <property type="nucleotide sequence ID" value="NM_017988.5"/>
</dbReference>
<dbReference type="SMR" id="Q6P3W7"/>
<dbReference type="BioGRID" id="120810">
    <property type="interactions" value="184"/>
</dbReference>
<dbReference type="CORUM" id="Q6P3W7"/>
<dbReference type="FunCoup" id="Q6P3W7">
    <property type="interactions" value="3697"/>
</dbReference>
<dbReference type="IntAct" id="Q6P3W7">
    <property type="interactions" value="67"/>
</dbReference>
<dbReference type="MINT" id="Q6P3W7"/>
<dbReference type="STRING" id="9606.ENSP00000489123"/>
<dbReference type="GlyCosmos" id="Q6P3W7">
    <property type="glycosylation" value="6 sites, 1 glycan"/>
</dbReference>
<dbReference type="GlyGen" id="Q6P3W7">
    <property type="glycosylation" value="8 sites, 1 O-linked glycan (8 sites)"/>
</dbReference>
<dbReference type="iPTMnet" id="Q6P3W7"/>
<dbReference type="MetOSite" id="Q6P3W7"/>
<dbReference type="PhosphoSitePlus" id="Q6P3W7"/>
<dbReference type="BioMuta" id="SCYL2"/>
<dbReference type="DMDM" id="74762350"/>
<dbReference type="CPTAC" id="non-CPTAC-5657"/>
<dbReference type="jPOST" id="Q6P3W7"/>
<dbReference type="MassIVE" id="Q6P3W7"/>
<dbReference type="PaxDb" id="9606-ENSP00000354061"/>
<dbReference type="PeptideAtlas" id="Q6P3W7"/>
<dbReference type="ProteomicsDB" id="66937"/>
<dbReference type="Pumba" id="Q6P3W7"/>
<dbReference type="Antibodypedia" id="17837">
    <property type="antibodies" value="176 antibodies from 26 providers"/>
</dbReference>
<dbReference type="DNASU" id="55681"/>
<dbReference type="Ensembl" id="ENST00000360820.7">
    <property type="protein sequence ID" value="ENSP00000354061.2"/>
    <property type="gene ID" value="ENSG00000136021.19"/>
</dbReference>
<dbReference type="GeneID" id="55681"/>
<dbReference type="KEGG" id="hsa:55681"/>
<dbReference type="MANE-Select" id="ENST00000360820.7">
    <property type="protein sequence ID" value="ENSP00000354061.2"/>
    <property type="RefSeq nucleotide sequence ID" value="NM_017988.6"/>
    <property type="RefSeq protein sequence ID" value="NP_060458.3"/>
</dbReference>
<dbReference type="UCSC" id="uc001thn.4">
    <property type="organism name" value="human"/>
</dbReference>
<dbReference type="AGR" id="HGNC:19286"/>
<dbReference type="CTD" id="55681"/>
<dbReference type="DisGeNET" id="55681"/>
<dbReference type="GeneCards" id="SCYL2"/>
<dbReference type="HGNC" id="HGNC:19286">
    <property type="gene designation" value="SCYL2"/>
</dbReference>
<dbReference type="HPA" id="ENSG00000136021">
    <property type="expression patterns" value="Low tissue specificity"/>
</dbReference>
<dbReference type="MalaCards" id="SCYL2"/>
<dbReference type="MIM" id="616365">
    <property type="type" value="gene"/>
</dbReference>
<dbReference type="MIM" id="618766">
    <property type="type" value="phenotype"/>
</dbReference>
<dbReference type="neXtProt" id="NX_Q6P3W7"/>
<dbReference type="OpenTargets" id="ENSG00000136021"/>
<dbReference type="Orphanet" id="1143">
    <property type="disease" value="Neurogenic arthrogryposis multiplex congenita"/>
</dbReference>
<dbReference type="PharmGKB" id="PA134887807"/>
<dbReference type="VEuPathDB" id="HostDB:ENSG00000136021"/>
<dbReference type="eggNOG" id="KOG2137">
    <property type="taxonomic scope" value="Eukaryota"/>
</dbReference>
<dbReference type="GeneTree" id="ENSGT00880000138031"/>
<dbReference type="InParanoid" id="Q6P3W7"/>
<dbReference type="OrthoDB" id="79687at2759"/>
<dbReference type="PAN-GO" id="Q6P3W7">
    <property type="GO annotations" value="0 GO annotations based on evolutionary models"/>
</dbReference>
<dbReference type="PhylomeDB" id="Q6P3W7"/>
<dbReference type="TreeFam" id="TF314178"/>
<dbReference type="PathwayCommons" id="Q6P3W7"/>
<dbReference type="SignaLink" id="Q6P3W7"/>
<dbReference type="BioGRID-ORCS" id="55681">
    <property type="hits" value="20 hits in 1191 CRISPR screens"/>
</dbReference>
<dbReference type="ChiTaRS" id="SCYL2">
    <property type="organism name" value="human"/>
</dbReference>
<dbReference type="GeneWiki" id="SCYL2"/>
<dbReference type="GenomeRNAi" id="55681"/>
<dbReference type="Pharos" id="Q6P3W7">
    <property type="development level" value="Tbio"/>
</dbReference>
<dbReference type="PRO" id="PR:Q6P3W7"/>
<dbReference type="Proteomes" id="UP000005640">
    <property type="component" value="Chromosome 12"/>
</dbReference>
<dbReference type="RNAct" id="Q6P3W7">
    <property type="molecule type" value="protein"/>
</dbReference>
<dbReference type="Bgee" id="ENSG00000136021">
    <property type="expression patterns" value="Expressed in mucosa of sigmoid colon and 183 other cell types or tissues"/>
</dbReference>
<dbReference type="ExpressionAtlas" id="Q6P3W7">
    <property type="expression patterns" value="baseline and differential"/>
</dbReference>
<dbReference type="GO" id="GO:0030136">
    <property type="term" value="C:clathrin-coated vesicle"/>
    <property type="evidence" value="ECO:0007669"/>
    <property type="project" value="UniProtKB-SubCell"/>
</dbReference>
<dbReference type="GO" id="GO:0010008">
    <property type="term" value="C:endosome membrane"/>
    <property type="evidence" value="ECO:0007669"/>
    <property type="project" value="UniProtKB-SubCell"/>
</dbReference>
<dbReference type="GO" id="GO:0005794">
    <property type="term" value="C:Golgi apparatus"/>
    <property type="evidence" value="ECO:0007669"/>
    <property type="project" value="UniProtKB-SubCell"/>
</dbReference>
<dbReference type="GO" id="GO:0005524">
    <property type="term" value="F:ATP binding"/>
    <property type="evidence" value="ECO:0007669"/>
    <property type="project" value="InterPro"/>
</dbReference>
<dbReference type="GO" id="GO:0004672">
    <property type="term" value="F:protein kinase activity"/>
    <property type="evidence" value="ECO:0007669"/>
    <property type="project" value="InterPro"/>
</dbReference>
<dbReference type="GO" id="GO:0005102">
    <property type="term" value="F:signaling receptor binding"/>
    <property type="evidence" value="ECO:0000353"/>
    <property type="project" value="BHF-UCL"/>
</dbReference>
<dbReference type="GO" id="GO:0007420">
    <property type="term" value="P:brain development"/>
    <property type="evidence" value="ECO:0000250"/>
    <property type="project" value="UniProtKB"/>
</dbReference>
<dbReference type="GO" id="GO:0072583">
    <property type="term" value="P:clathrin-dependent endocytosis"/>
    <property type="evidence" value="ECO:0000314"/>
    <property type="project" value="BHF-UCL"/>
</dbReference>
<dbReference type="GO" id="GO:0008333">
    <property type="term" value="P:endosome to lysosome transport"/>
    <property type="evidence" value="ECO:0000314"/>
    <property type="project" value="BHF-UCL"/>
</dbReference>
<dbReference type="GO" id="GO:0090090">
    <property type="term" value="P:negative regulation of canonical Wnt signaling pathway"/>
    <property type="evidence" value="ECO:0000314"/>
    <property type="project" value="BHF-UCL"/>
</dbReference>
<dbReference type="GO" id="GO:0021860">
    <property type="term" value="P:pyramidal neuron development"/>
    <property type="evidence" value="ECO:0000250"/>
    <property type="project" value="UniProtKB"/>
</dbReference>
<dbReference type="GO" id="GO:0031623">
    <property type="term" value="P:receptor internalization"/>
    <property type="evidence" value="ECO:0000314"/>
    <property type="project" value="BHF-UCL"/>
</dbReference>
<dbReference type="CDD" id="cd14011">
    <property type="entry name" value="PK_SCY1_like"/>
    <property type="match status" value="1"/>
</dbReference>
<dbReference type="FunFam" id="3.30.200.20:FF:000179">
    <property type="entry name" value="SCY1 like pseudokinase 2"/>
    <property type="match status" value="1"/>
</dbReference>
<dbReference type="FunFam" id="1.10.510.10:FF:000352">
    <property type="entry name" value="SCY1-like pseudokinase 2"/>
    <property type="match status" value="1"/>
</dbReference>
<dbReference type="FunFam" id="1.25.10.10:FF:000189">
    <property type="entry name" value="SCY1-like pseudokinase 2"/>
    <property type="match status" value="1"/>
</dbReference>
<dbReference type="Gene3D" id="1.25.10.10">
    <property type="entry name" value="Leucine-rich Repeat Variant"/>
    <property type="match status" value="1"/>
</dbReference>
<dbReference type="Gene3D" id="3.30.200.20">
    <property type="entry name" value="Phosphorylase Kinase, domain 1"/>
    <property type="match status" value="1"/>
</dbReference>
<dbReference type="Gene3D" id="1.10.510.10">
    <property type="entry name" value="Transferase(Phosphotransferase) domain 1"/>
    <property type="match status" value="1"/>
</dbReference>
<dbReference type="InterPro" id="IPR011989">
    <property type="entry name" value="ARM-like"/>
</dbReference>
<dbReference type="InterPro" id="IPR016024">
    <property type="entry name" value="ARM-type_fold"/>
</dbReference>
<dbReference type="InterPro" id="IPR051177">
    <property type="entry name" value="CIK-Related_Protein"/>
</dbReference>
<dbReference type="InterPro" id="IPR011009">
    <property type="entry name" value="Kinase-like_dom_sf"/>
</dbReference>
<dbReference type="InterPro" id="IPR000719">
    <property type="entry name" value="Prot_kinase_dom"/>
</dbReference>
<dbReference type="PANTHER" id="PTHR12984:SF18">
    <property type="entry name" value="SCY1-LIKE PROTEIN 2"/>
    <property type="match status" value="1"/>
</dbReference>
<dbReference type="PANTHER" id="PTHR12984">
    <property type="entry name" value="SCY1-RELATED S/T PROTEIN KINASE-LIKE"/>
    <property type="match status" value="1"/>
</dbReference>
<dbReference type="Pfam" id="PF00069">
    <property type="entry name" value="Pkinase"/>
    <property type="match status" value="1"/>
</dbReference>
<dbReference type="SMART" id="SM00220">
    <property type="entry name" value="S_TKc"/>
    <property type="match status" value="1"/>
</dbReference>
<dbReference type="SUPFAM" id="SSF48371">
    <property type="entry name" value="ARM repeat"/>
    <property type="match status" value="1"/>
</dbReference>
<dbReference type="SUPFAM" id="SSF56112">
    <property type="entry name" value="Protein kinase-like (PK-like)"/>
    <property type="match status" value="1"/>
</dbReference>
<dbReference type="PROSITE" id="PS50011">
    <property type="entry name" value="PROTEIN_KINASE_DOM"/>
    <property type="match status" value="1"/>
</dbReference>
<proteinExistence type="evidence at protein level"/>
<name>SCYL2_HUMAN</name>
<reference key="1">
    <citation type="journal article" date="2004" name="Nat. Genet.">
        <title>Complete sequencing and characterization of 21,243 full-length human cDNAs.</title>
        <authorList>
            <person name="Ota T."/>
            <person name="Suzuki Y."/>
            <person name="Nishikawa T."/>
            <person name="Otsuki T."/>
            <person name="Sugiyama T."/>
            <person name="Irie R."/>
            <person name="Wakamatsu A."/>
            <person name="Hayashi K."/>
            <person name="Sato H."/>
            <person name="Nagai K."/>
            <person name="Kimura K."/>
            <person name="Makita H."/>
            <person name="Sekine M."/>
            <person name="Obayashi M."/>
            <person name="Nishi T."/>
            <person name="Shibahara T."/>
            <person name="Tanaka T."/>
            <person name="Ishii S."/>
            <person name="Yamamoto J."/>
            <person name="Saito K."/>
            <person name="Kawai Y."/>
            <person name="Isono Y."/>
            <person name="Nakamura Y."/>
            <person name="Nagahari K."/>
            <person name="Murakami K."/>
            <person name="Yasuda T."/>
            <person name="Iwayanagi T."/>
            <person name="Wagatsuma M."/>
            <person name="Shiratori A."/>
            <person name="Sudo H."/>
            <person name="Hosoiri T."/>
            <person name="Kaku Y."/>
            <person name="Kodaira H."/>
            <person name="Kondo H."/>
            <person name="Sugawara M."/>
            <person name="Takahashi M."/>
            <person name="Kanda K."/>
            <person name="Yokoi T."/>
            <person name="Furuya T."/>
            <person name="Kikkawa E."/>
            <person name="Omura Y."/>
            <person name="Abe K."/>
            <person name="Kamihara K."/>
            <person name="Katsuta N."/>
            <person name="Sato K."/>
            <person name="Tanikawa M."/>
            <person name="Yamazaki M."/>
            <person name="Ninomiya K."/>
            <person name="Ishibashi T."/>
            <person name="Yamashita H."/>
            <person name="Murakawa K."/>
            <person name="Fujimori K."/>
            <person name="Tanai H."/>
            <person name="Kimata M."/>
            <person name="Watanabe M."/>
            <person name="Hiraoka S."/>
            <person name="Chiba Y."/>
            <person name="Ishida S."/>
            <person name="Ono Y."/>
            <person name="Takiguchi S."/>
            <person name="Watanabe S."/>
            <person name="Yosida M."/>
            <person name="Hotuta T."/>
            <person name="Kusano J."/>
            <person name="Kanehori K."/>
            <person name="Takahashi-Fujii A."/>
            <person name="Hara H."/>
            <person name="Tanase T.-O."/>
            <person name="Nomura Y."/>
            <person name="Togiya S."/>
            <person name="Komai F."/>
            <person name="Hara R."/>
            <person name="Takeuchi K."/>
            <person name="Arita M."/>
            <person name="Imose N."/>
            <person name="Musashino K."/>
            <person name="Yuuki H."/>
            <person name="Oshima A."/>
            <person name="Sasaki N."/>
            <person name="Aotsuka S."/>
            <person name="Yoshikawa Y."/>
            <person name="Matsunawa H."/>
            <person name="Ichihara T."/>
            <person name="Shiohata N."/>
            <person name="Sano S."/>
            <person name="Moriya S."/>
            <person name="Momiyama H."/>
            <person name="Satoh N."/>
            <person name="Takami S."/>
            <person name="Terashima Y."/>
            <person name="Suzuki O."/>
            <person name="Nakagawa S."/>
            <person name="Senoh A."/>
            <person name="Mizoguchi H."/>
            <person name="Goto Y."/>
            <person name="Shimizu F."/>
            <person name="Wakebe H."/>
            <person name="Hishigaki H."/>
            <person name="Watanabe T."/>
            <person name="Sugiyama A."/>
            <person name="Takemoto M."/>
            <person name="Kawakami B."/>
            <person name="Yamazaki M."/>
            <person name="Watanabe K."/>
            <person name="Kumagai A."/>
            <person name="Itakura S."/>
            <person name="Fukuzumi Y."/>
            <person name="Fujimori Y."/>
            <person name="Komiyama M."/>
            <person name="Tashiro H."/>
            <person name="Tanigami A."/>
            <person name="Fujiwara T."/>
            <person name="Ono T."/>
            <person name="Yamada K."/>
            <person name="Fujii Y."/>
            <person name="Ozaki K."/>
            <person name="Hirao M."/>
            <person name="Ohmori Y."/>
            <person name="Kawabata A."/>
            <person name="Hikiji T."/>
            <person name="Kobatake N."/>
            <person name="Inagaki H."/>
            <person name="Ikema Y."/>
            <person name="Okamoto S."/>
            <person name="Okitani R."/>
            <person name="Kawakami T."/>
            <person name="Noguchi S."/>
            <person name="Itoh T."/>
            <person name="Shigeta K."/>
            <person name="Senba T."/>
            <person name="Matsumura K."/>
            <person name="Nakajima Y."/>
            <person name="Mizuno T."/>
            <person name="Morinaga M."/>
            <person name="Sasaki M."/>
            <person name="Togashi T."/>
            <person name="Oyama M."/>
            <person name="Hata H."/>
            <person name="Watanabe M."/>
            <person name="Komatsu T."/>
            <person name="Mizushima-Sugano J."/>
            <person name="Satoh T."/>
            <person name="Shirai Y."/>
            <person name="Takahashi Y."/>
            <person name="Nakagawa K."/>
            <person name="Okumura K."/>
            <person name="Nagase T."/>
            <person name="Nomura N."/>
            <person name="Kikuchi H."/>
            <person name="Masuho Y."/>
            <person name="Yamashita R."/>
            <person name="Nakai K."/>
            <person name="Yada T."/>
            <person name="Nakamura Y."/>
            <person name="Ohara O."/>
            <person name="Isogai T."/>
            <person name="Sugano S."/>
        </authorList>
    </citation>
    <scope>NUCLEOTIDE SEQUENCE [LARGE SCALE MRNA]</scope>
    <scope>VARIANT LEU-357</scope>
    <source>
        <tissue>Teratocarcinoma</tissue>
        <tissue>Trachea</tissue>
    </source>
</reference>
<reference key="2">
    <citation type="submission" date="2005-07" db="EMBL/GenBank/DDBJ databases">
        <authorList>
            <person name="Mural R.J."/>
            <person name="Istrail S."/>
            <person name="Sutton G.G."/>
            <person name="Florea L."/>
            <person name="Halpern A.L."/>
            <person name="Mobarry C.M."/>
            <person name="Lippert R."/>
            <person name="Walenz B."/>
            <person name="Shatkay H."/>
            <person name="Dew I."/>
            <person name="Miller J.R."/>
            <person name="Flanigan M.J."/>
            <person name="Edwards N.J."/>
            <person name="Bolanos R."/>
            <person name="Fasulo D."/>
            <person name="Halldorsson B.V."/>
            <person name="Hannenhalli S."/>
            <person name="Turner R."/>
            <person name="Yooseph S."/>
            <person name="Lu F."/>
            <person name="Nusskern D.R."/>
            <person name="Shue B.C."/>
            <person name="Zheng X.H."/>
            <person name="Zhong F."/>
            <person name="Delcher A.L."/>
            <person name="Huson D.H."/>
            <person name="Kravitz S.A."/>
            <person name="Mouchard L."/>
            <person name="Reinert K."/>
            <person name="Remington K.A."/>
            <person name="Clark A.G."/>
            <person name="Waterman M.S."/>
            <person name="Eichler E.E."/>
            <person name="Adams M.D."/>
            <person name="Hunkapiller M.W."/>
            <person name="Myers E.W."/>
            <person name="Venter J.C."/>
        </authorList>
    </citation>
    <scope>NUCLEOTIDE SEQUENCE [LARGE SCALE GENOMIC DNA]</scope>
</reference>
<reference key="3">
    <citation type="journal article" date="2004" name="Genome Res.">
        <title>The status, quality, and expansion of the NIH full-length cDNA project: the Mammalian Gene Collection (MGC).</title>
        <authorList>
            <consortium name="The MGC Project Team"/>
        </authorList>
    </citation>
    <scope>NUCLEOTIDE SEQUENCE [LARGE SCALE MRNA]</scope>
    <source>
        <tissue>Carcinoma</tissue>
        <tissue>Leiomyosarcoma</tissue>
    </source>
</reference>
<reference key="4">
    <citation type="journal article" date="2000" name="DNA Res.">
        <title>Prediction of the coding sequences of unidentified human genes. XVI. The complete sequences of 150 new cDNA clones from brain which code for large proteins in vitro.</title>
        <authorList>
            <person name="Nagase T."/>
            <person name="Kikuno R."/>
            <person name="Ishikawa K."/>
            <person name="Hirosawa M."/>
            <person name="Ohara O."/>
        </authorList>
    </citation>
    <scope>NUCLEOTIDE SEQUENCE [LARGE SCALE MRNA] OF 138-929</scope>
    <source>
        <tissue>Brain</tissue>
    </source>
</reference>
<reference key="5">
    <citation type="journal article" date="2005" name="J. Biol. Chem.">
        <title>CVAK104 is a novel poly-L-lysine-stimulated kinase that targets the beta2-subunit of AP2.</title>
        <authorList>
            <person name="Conner S.D."/>
            <person name="Schmid S.L."/>
        </authorList>
    </citation>
    <scope>FUNCTION</scope>
    <scope>INTERACTION WITH CLATHRIN AND AP2 COMPLEX</scope>
    <scope>AUTOPHOSPHORYLATION</scope>
    <scope>SUBCELLULAR LOCATION</scope>
</reference>
<reference key="6">
    <citation type="journal article" date="2006" name="Mol. Biol. Cell">
        <title>Clathrin-dependent association of CVAK104 with endosomes and the trans-Golgi network.</title>
        <authorList>
            <person name="Duewel M."/>
            <person name="Ungewickell E.J."/>
        </authorList>
    </citation>
    <scope>FUNCTION</scope>
    <scope>INTERACTION WITH CLATHRIN AND AP2 COMPLEX</scope>
    <scope>SUBCELLULAR LOCATION</scope>
</reference>
<reference key="7">
    <citation type="journal article" date="2006" name="PLoS Biol.">
        <title>Role of the AP2 beta-appendage hub in recruiting partners for clathrin-coated vesicle assembly.</title>
        <authorList>
            <person name="Schmid E.M."/>
            <person name="Ford M.G.J."/>
            <person name="Burtey A."/>
            <person name="Praefcke G.J.K."/>
            <person name="Peak-Chew S.-Y."/>
            <person name="Mills I.G."/>
            <person name="Benmerah A."/>
            <person name="McMahon H.T."/>
        </authorList>
    </citation>
    <scope>INTERACTION WITH AP2B1</scope>
</reference>
<reference key="8">
    <citation type="journal article" date="2008" name="Proc. Natl. Acad. Sci. U.S.A.">
        <title>A quantitative atlas of mitotic phosphorylation.</title>
        <authorList>
            <person name="Dephoure N."/>
            <person name="Zhou C."/>
            <person name="Villen J."/>
            <person name="Beausoleil S.A."/>
            <person name="Bakalarski C.E."/>
            <person name="Elledge S.J."/>
            <person name="Gygi S.P."/>
        </authorList>
    </citation>
    <scope>PHOSPHORYLATION [LARGE SCALE ANALYSIS] AT SER-677</scope>
    <scope>IDENTIFICATION BY MASS SPECTROMETRY [LARGE SCALE ANALYSIS]</scope>
    <source>
        <tissue>Cervix carcinoma</tissue>
    </source>
</reference>
<reference key="9">
    <citation type="journal article" date="2011" name="BMC Syst. Biol.">
        <title>Initial characterization of the human central proteome.</title>
        <authorList>
            <person name="Burkard T.R."/>
            <person name="Planyavsky M."/>
            <person name="Kaupe I."/>
            <person name="Breitwieser F.P."/>
            <person name="Buerckstuemmer T."/>
            <person name="Bennett K.L."/>
            <person name="Superti-Furga G."/>
            <person name="Colinge J."/>
        </authorList>
    </citation>
    <scope>IDENTIFICATION BY MASS SPECTROMETRY [LARGE SCALE ANALYSIS]</scope>
</reference>
<reference key="10">
    <citation type="journal article" date="2013" name="J. Proteome Res.">
        <title>Toward a comprehensive characterization of a human cancer cell phosphoproteome.</title>
        <authorList>
            <person name="Zhou H."/>
            <person name="Di Palma S."/>
            <person name="Preisinger C."/>
            <person name="Peng M."/>
            <person name="Polat A.N."/>
            <person name="Heck A.J."/>
            <person name="Mohammed S."/>
        </authorList>
    </citation>
    <scope>PHOSPHORYLATION [LARGE SCALE ANALYSIS] AT SER-677 AND THR-708</scope>
    <scope>IDENTIFICATION BY MASS SPECTROMETRY [LARGE SCALE ANALYSIS]</scope>
    <source>
        <tissue>Cervix carcinoma</tissue>
        <tissue>Erythroleukemia</tissue>
    </source>
</reference>
<reference key="11">
    <citation type="journal article" date="2007" name="Nature">
        <title>Patterns of somatic mutation in human cancer genomes.</title>
        <authorList>
            <person name="Greenman C."/>
            <person name="Stephens P."/>
            <person name="Smith R."/>
            <person name="Dalgliesh G.L."/>
            <person name="Hunter C."/>
            <person name="Bignell G."/>
            <person name="Davies H."/>
            <person name="Teague J."/>
            <person name="Butler A."/>
            <person name="Stevens C."/>
            <person name="Edkins S."/>
            <person name="O'Meara S."/>
            <person name="Vastrik I."/>
            <person name="Schmidt E.E."/>
            <person name="Avis T."/>
            <person name="Barthorpe S."/>
            <person name="Bhamra G."/>
            <person name="Buck G."/>
            <person name="Choudhury B."/>
            <person name="Clements J."/>
            <person name="Cole J."/>
            <person name="Dicks E."/>
            <person name="Forbes S."/>
            <person name="Gray K."/>
            <person name="Halliday K."/>
            <person name="Harrison R."/>
            <person name="Hills K."/>
            <person name="Hinton J."/>
            <person name="Jenkinson A."/>
            <person name="Jones D."/>
            <person name="Menzies A."/>
            <person name="Mironenko T."/>
            <person name="Perry J."/>
            <person name="Raine K."/>
            <person name="Richardson D."/>
            <person name="Shepherd R."/>
            <person name="Small A."/>
            <person name="Tofts C."/>
            <person name="Varian J."/>
            <person name="Webb T."/>
            <person name="West S."/>
            <person name="Widaa S."/>
            <person name="Yates A."/>
            <person name="Cahill D.P."/>
            <person name="Louis D.N."/>
            <person name="Goldstraw P."/>
            <person name="Nicholson A.G."/>
            <person name="Brasseur F."/>
            <person name="Looijenga L."/>
            <person name="Weber B.L."/>
            <person name="Chiew Y.-E."/>
            <person name="DeFazio A."/>
            <person name="Greaves M.F."/>
            <person name="Green A.R."/>
            <person name="Campbell P."/>
            <person name="Birney E."/>
            <person name="Easton D.F."/>
            <person name="Chenevix-Trench G."/>
            <person name="Tan M.-H."/>
            <person name="Khoo S.K."/>
            <person name="Teh B.T."/>
            <person name="Yuen S.T."/>
            <person name="Leung S.Y."/>
            <person name="Wooster R."/>
            <person name="Futreal P.A."/>
            <person name="Stratton M.R."/>
        </authorList>
    </citation>
    <scope>VARIANTS [LARGE SCALE ANALYSIS] LEU-357; SER-720 AND HIS-863</scope>
</reference>
<reference key="12">
    <citation type="journal article" date="2020" name="Hum. Genet.">
        <title>Recessive mutations in SCYL2 cause a novel syndromic form of arthrogryposis in humans.</title>
        <authorList>
            <person name="Seidahmed M.Z."/>
            <person name="Al-Kindi A."/>
            <person name="Alsaif H.S."/>
            <person name="Miqdad A."/>
            <person name="Alabbad N."/>
            <person name="Alfifi A."/>
            <person name="Abdelbasit O.B."/>
            <person name="Alhussein K."/>
            <person name="Alsamadi A."/>
            <person name="Ibrahim N."/>
            <person name="Al-Futaisi A."/>
            <person name="Al-Maawali A."/>
            <person name="Alkuraya F.S."/>
        </authorList>
    </citation>
    <scope>INVOLVEMENT IN AMC4</scope>
    <scope>VARIANT AMC4 36-ARG--GLY-929 DEL</scope>
</reference>